<protein>
    <recommendedName>
        <fullName>NADH-ubiquinone oxidoreductase chain 6</fullName>
        <ecNumber>7.1.1.2</ecNumber>
    </recommendedName>
    <alternativeName>
        <fullName>NADH dehydrogenase subunit 6</fullName>
    </alternativeName>
</protein>
<proteinExistence type="inferred from homology"/>
<organism>
    <name type="scientific">Cepphus columba</name>
    <name type="common">Pigeon guillemot</name>
    <dbReference type="NCBI Taxonomy" id="28696"/>
    <lineage>
        <taxon>Eukaryota</taxon>
        <taxon>Metazoa</taxon>
        <taxon>Chordata</taxon>
        <taxon>Craniata</taxon>
        <taxon>Vertebrata</taxon>
        <taxon>Euteleostomi</taxon>
        <taxon>Archelosauria</taxon>
        <taxon>Archosauria</taxon>
        <taxon>Dinosauria</taxon>
        <taxon>Saurischia</taxon>
        <taxon>Theropoda</taxon>
        <taxon>Coelurosauria</taxon>
        <taxon>Aves</taxon>
        <taxon>Neognathae</taxon>
        <taxon>Neoaves</taxon>
        <taxon>Charadriiformes</taxon>
        <taxon>Alcidae</taxon>
        <taxon>Cepphus</taxon>
    </lineage>
</organism>
<accession>P43197</accession>
<geneLocation type="mitochondrion"/>
<evidence type="ECO:0000250" key="1"/>
<evidence type="ECO:0000255" key="2"/>
<evidence type="ECO:0000305" key="3"/>
<feature type="chain" id="PRO_0000118262" description="NADH-ubiquinone oxidoreductase chain 6">
    <location>
        <begin position="1"/>
        <end position="173"/>
    </location>
</feature>
<feature type="transmembrane region" description="Helical" evidence="2">
    <location>
        <begin position="1"/>
        <end position="21"/>
    </location>
</feature>
<feature type="transmembrane region" description="Helical" evidence="2">
    <location>
        <begin position="27"/>
        <end position="47"/>
    </location>
</feature>
<feature type="transmembrane region" description="Helical" evidence="2">
    <location>
        <begin position="48"/>
        <end position="68"/>
    </location>
</feature>
<feature type="transmembrane region" description="Helical" evidence="2">
    <location>
        <begin position="87"/>
        <end position="107"/>
    </location>
</feature>
<feature type="transmembrane region" description="Helical" evidence="2">
    <location>
        <begin position="139"/>
        <end position="159"/>
    </location>
</feature>
<name>NU6M_CEPCO</name>
<dbReference type="EC" id="7.1.1.2"/>
<dbReference type="EMBL" id="X73918">
    <property type="protein sequence ID" value="CAA52123.1"/>
    <property type="molecule type" value="Genomic_DNA"/>
</dbReference>
<dbReference type="PIR" id="S44399">
    <property type="entry name" value="S44399"/>
</dbReference>
<dbReference type="SMR" id="P43197"/>
<dbReference type="GO" id="GO:0031966">
    <property type="term" value="C:mitochondrial membrane"/>
    <property type="evidence" value="ECO:0007669"/>
    <property type="project" value="UniProtKB-SubCell"/>
</dbReference>
<dbReference type="GO" id="GO:0008137">
    <property type="term" value="F:NADH dehydrogenase (ubiquinone) activity"/>
    <property type="evidence" value="ECO:0007669"/>
    <property type="project" value="UniProtKB-EC"/>
</dbReference>
<dbReference type="Gene3D" id="1.20.120.1200">
    <property type="entry name" value="NADH-ubiquinone/plastoquinone oxidoreductase chain 6, subunit NuoJ"/>
    <property type="match status" value="1"/>
</dbReference>
<dbReference type="InterPro" id="IPR050269">
    <property type="entry name" value="ComplexI_Subunit6"/>
</dbReference>
<dbReference type="InterPro" id="IPR001457">
    <property type="entry name" value="NADH_UbQ/plastoQ_OxRdtase_su6"/>
</dbReference>
<dbReference type="InterPro" id="IPR042106">
    <property type="entry name" value="Nuo/plastoQ_OxRdtase_6_NuoJ"/>
</dbReference>
<dbReference type="PANTHER" id="PTHR11435">
    <property type="entry name" value="NADH UBIQUINONE OXIDOREDUCTASE SUBUNIT ND6"/>
    <property type="match status" value="1"/>
</dbReference>
<dbReference type="PANTHER" id="PTHR11435:SF1">
    <property type="entry name" value="NADH-UBIQUINONE OXIDOREDUCTASE CHAIN 6"/>
    <property type="match status" value="1"/>
</dbReference>
<dbReference type="Pfam" id="PF00499">
    <property type="entry name" value="Oxidored_q3"/>
    <property type="match status" value="1"/>
</dbReference>
<reference key="1">
    <citation type="journal article" date="1994" name="Curr. Genet.">
        <title>Intragenic rearrangements in the mitochondrial NADH dehydrogenase subunit 6 gene of vertebrates.</title>
        <authorList>
            <person name="Moum T."/>
            <person name="Willassen N.P."/>
            <person name="Johansen S."/>
        </authorList>
    </citation>
    <scope>NUCLEOTIDE SEQUENCE [GENOMIC DNA]</scope>
</reference>
<gene>
    <name type="primary">MT-ND6</name>
    <name type="synonym">MTND6</name>
    <name type="synonym">NADH6</name>
    <name type="synonym">ND6</name>
</gene>
<comment type="function">
    <text evidence="1">Core subunit of the mitochondrial membrane respiratory chain NADH dehydrogenase (Complex I) that is believed to belong to the minimal assembly required for catalysis. Complex I functions in the transfer of electrons from NADH to the respiratory chain. The immediate electron acceptor for the enzyme is believed to be ubiquinone (By similarity).</text>
</comment>
<comment type="catalytic activity">
    <reaction>
        <text>a ubiquinone + NADH + 5 H(+)(in) = a ubiquinol + NAD(+) + 4 H(+)(out)</text>
        <dbReference type="Rhea" id="RHEA:29091"/>
        <dbReference type="Rhea" id="RHEA-COMP:9565"/>
        <dbReference type="Rhea" id="RHEA-COMP:9566"/>
        <dbReference type="ChEBI" id="CHEBI:15378"/>
        <dbReference type="ChEBI" id="CHEBI:16389"/>
        <dbReference type="ChEBI" id="CHEBI:17976"/>
        <dbReference type="ChEBI" id="CHEBI:57540"/>
        <dbReference type="ChEBI" id="CHEBI:57945"/>
        <dbReference type="EC" id="7.1.1.2"/>
    </reaction>
</comment>
<comment type="subcellular location">
    <subcellularLocation>
        <location evidence="3">Mitochondrion membrane</location>
        <topology evidence="3">Multi-pass membrane protein</topology>
    </subcellularLocation>
</comment>
<comment type="similarity">
    <text evidence="3">Belongs to the complex I subunit 6 family.</text>
</comment>
<sequence length="173" mass="17982">MTYFVVFLGLCFVLGGLAVASNPSPYYGVVGLVLASVVGCGWLLSLGVSFVSLVLFMVYLGGMLVVFVYSVSLAADPFPEAWGDWGVVGYGASFVVVLMVGGVIGGFVGGWDFGVVTVDSVGVFSARLDFSGVAMFYSCGVGMFLVAGWGLVLTLFVVLELVRGLSRGAIRAV</sequence>
<keyword id="KW-0249">Electron transport</keyword>
<keyword id="KW-0472">Membrane</keyword>
<keyword id="KW-0496">Mitochondrion</keyword>
<keyword id="KW-0520">NAD</keyword>
<keyword id="KW-0679">Respiratory chain</keyword>
<keyword id="KW-1278">Translocase</keyword>
<keyword id="KW-0812">Transmembrane</keyword>
<keyword id="KW-1133">Transmembrane helix</keyword>
<keyword id="KW-0813">Transport</keyword>
<keyword id="KW-0830">Ubiquinone</keyword>